<protein>
    <recommendedName>
        <fullName evidence="1">3-hydroxyacyl-[acyl-carrier-protein] dehydratase FabZ</fullName>
        <ecNumber evidence="1">4.2.1.59</ecNumber>
    </recommendedName>
    <alternativeName>
        <fullName evidence="1">(3R)-hydroxymyristoyl-[acyl-carrier-protein] dehydratase</fullName>
        <shortName evidence="1">(3R)-hydroxymyristoyl-ACP dehydrase</shortName>
    </alternativeName>
    <alternativeName>
        <fullName evidence="1">Beta-hydroxyacyl-ACP dehydratase</fullName>
    </alternativeName>
</protein>
<proteinExistence type="inferred from homology"/>
<feature type="chain" id="PRO_0000242893" description="3-hydroxyacyl-[acyl-carrier-protein] dehydratase FabZ">
    <location>
        <begin position="1"/>
        <end position="161"/>
    </location>
</feature>
<feature type="active site" evidence="1">
    <location>
        <position position="64"/>
    </location>
</feature>
<comment type="function">
    <text evidence="1">Involved in unsaturated fatty acids biosynthesis. Catalyzes the dehydration of short chain beta-hydroxyacyl-ACPs and long chain saturated and unsaturated beta-hydroxyacyl-ACPs.</text>
</comment>
<comment type="catalytic activity">
    <reaction evidence="1">
        <text>a (3R)-hydroxyacyl-[ACP] = a (2E)-enoyl-[ACP] + H2O</text>
        <dbReference type="Rhea" id="RHEA:13097"/>
        <dbReference type="Rhea" id="RHEA-COMP:9925"/>
        <dbReference type="Rhea" id="RHEA-COMP:9945"/>
        <dbReference type="ChEBI" id="CHEBI:15377"/>
        <dbReference type="ChEBI" id="CHEBI:78784"/>
        <dbReference type="ChEBI" id="CHEBI:78827"/>
        <dbReference type="EC" id="4.2.1.59"/>
    </reaction>
</comment>
<comment type="subcellular location">
    <subcellularLocation>
        <location evidence="1">Cytoplasm</location>
    </subcellularLocation>
</comment>
<comment type="similarity">
    <text evidence="1">Belongs to the thioester dehydratase family. FabZ subfamily.</text>
</comment>
<evidence type="ECO:0000255" key="1">
    <source>
        <dbReference type="HAMAP-Rule" id="MF_00406"/>
    </source>
</evidence>
<keyword id="KW-0963">Cytoplasm</keyword>
<keyword id="KW-0441">Lipid A biosynthesis</keyword>
<keyword id="KW-0444">Lipid biosynthesis</keyword>
<keyword id="KW-0443">Lipid metabolism</keyword>
<keyword id="KW-0456">Lyase</keyword>
<organism>
    <name type="scientific">Paramagnetospirillum magneticum (strain ATCC 700264 / AMB-1)</name>
    <name type="common">Magnetospirillum magneticum</name>
    <dbReference type="NCBI Taxonomy" id="342108"/>
    <lineage>
        <taxon>Bacteria</taxon>
        <taxon>Pseudomonadati</taxon>
        <taxon>Pseudomonadota</taxon>
        <taxon>Alphaproteobacteria</taxon>
        <taxon>Rhodospirillales</taxon>
        <taxon>Magnetospirillaceae</taxon>
        <taxon>Paramagnetospirillum</taxon>
    </lineage>
</organism>
<name>FABZ_PARM1</name>
<dbReference type="EC" id="4.2.1.59" evidence="1"/>
<dbReference type="EMBL" id="AP007255">
    <property type="protein sequence ID" value="BAE51291.1"/>
    <property type="molecule type" value="Genomic_DNA"/>
</dbReference>
<dbReference type="SMR" id="Q2W4D4"/>
<dbReference type="STRING" id="342108.amb2487"/>
<dbReference type="KEGG" id="mag:amb2487"/>
<dbReference type="HOGENOM" id="CLU_078912_1_2_5"/>
<dbReference type="Proteomes" id="UP000007058">
    <property type="component" value="Chromosome"/>
</dbReference>
<dbReference type="GO" id="GO:0005737">
    <property type="term" value="C:cytoplasm"/>
    <property type="evidence" value="ECO:0007669"/>
    <property type="project" value="UniProtKB-SubCell"/>
</dbReference>
<dbReference type="GO" id="GO:0016020">
    <property type="term" value="C:membrane"/>
    <property type="evidence" value="ECO:0007669"/>
    <property type="project" value="GOC"/>
</dbReference>
<dbReference type="GO" id="GO:0019171">
    <property type="term" value="F:(3R)-hydroxyacyl-[acyl-carrier-protein] dehydratase activity"/>
    <property type="evidence" value="ECO:0007669"/>
    <property type="project" value="UniProtKB-EC"/>
</dbReference>
<dbReference type="GO" id="GO:0006633">
    <property type="term" value="P:fatty acid biosynthetic process"/>
    <property type="evidence" value="ECO:0007669"/>
    <property type="project" value="UniProtKB-UniRule"/>
</dbReference>
<dbReference type="GO" id="GO:0009245">
    <property type="term" value="P:lipid A biosynthetic process"/>
    <property type="evidence" value="ECO:0007669"/>
    <property type="project" value="UniProtKB-UniRule"/>
</dbReference>
<dbReference type="CDD" id="cd01288">
    <property type="entry name" value="FabZ"/>
    <property type="match status" value="1"/>
</dbReference>
<dbReference type="FunFam" id="3.10.129.10:FF:000001">
    <property type="entry name" value="3-hydroxyacyl-[acyl-carrier-protein] dehydratase FabZ"/>
    <property type="match status" value="1"/>
</dbReference>
<dbReference type="Gene3D" id="3.10.129.10">
    <property type="entry name" value="Hotdog Thioesterase"/>
    <property type="match status" value="1"/>
</dbReference>
<dbReference type="HAMAP" id="MF_00406">
    <property type="entry name" value="FabZ"/>
    <property type="match status" value="1"/>
</dbReference>
<dbReference type="InterPro" id="IPR013114">
    <property type="entry name" value="FabA_FabZ"/>
</dbReference>
<dbReference type="InterPro" id="IPR010084">
    <property type="entry name" value="FabZ"/>
</dbReference>
<dbReference type="InterPro" id="IPR029069">
    <property type="entry name" value="HotDog_dom_sf"/>
</dbReference>
<dbReference type="NCBIfam" id="TIGR01750">
    <property type="entry name" value="fabZ"/>
    <property type="match status" value="1"/>
</dbReference>
<dbReference type="NCBIfam" id="NF000582">
    <property type="entry name" value="PRK00006.1"/>
    <property type="match status" value="1"/>
</dbReference>
<dbReference type="PANTHER" id="PTHR30272">
    <property type="entry name" value="3-HYDROXYACYL-[ACYL-CARRIER-PROTEIN] DEHYDRATASE"/>
    <property type="match status" value="1"/>
</dbReference>
<dbReference type="PANTHER" id="PTHR30272:SF1">
    <property type="entry name" value="3-HYDROXYACYL-[ACYL-CARRIER-PROTEIN] DEHYDRATASE"/>
    <property type="match status" value="1"/>
</dbReference>
<dbReference type="Pfam" id="PF07977">
    <property type="entry name" value="FabA"/>
    <property type="match status" value="1"/>
</dbReference>
<dbReference type="SUPFAM" id="SSF54637">
    <property type="entry name" value="Thioesterase/thiol ester dehydrase-isomerase"/>
    <property type="match status" value="1"/>
</dbReference>
<gene>
    <name evidence="1" type="primary">fabZ</name>
    <name type="ordered locus">amb2487</name>
</gene>
<sequence length="161" mass="17885">MSMDTANNDQGTDLGKVIDISRIIQMIPHRYPFLMVDRVVQVVANESAVGIKNVTINEPFFQGHFPSRPVFPGVLIIESMAQTAAVLVVETLGESAEGKLVYFMSVENCRFRKPVGPGDQLMIHVFKERSRGNVWKFRGEAKVDGVLVAEATYAAMILDEK</sequence>
<reference key="1">
    <citation type="journal article" date="2005" name="DNA Res.">
        <title>Complete genome sequence of the facultative anaerobic magnetotactic bacterium Magnetospirillum sp. strain AMB-1.</title>
        <authorList>
            <person name="Matsunaga T."/>
            <person name="Okamura Y."/>
            <person name="Fukuda Y."/>
            <person name="Wahyudi A.T."/>
            <person name="Murase Y."/>
            <person name="Takeyama H."/>
        </authorList>
    </citation>
    <scope>NUCLEOTIDE SEQUENCE [LARGE SCALE GENOMIC DNA]</scope>
    <source>
        <strain>ATCC 700264 / AMB-1</strain>
    </source>
</reference>
<accession>Q2W4D4</accession>